<organism>
    <name type="scientific">Methanobrevibacter smithii (strain ATCC 35061 / DSM 861 / OCM 144 / PS)</name>
    <dbReference type="NCBI Taxonomy" id="420247"/>
    <lineage>
        <taxon>Archaea</taxon>
        <taxon>Methanobacteriati</taxon>
        <taxon>Methanobacteriota</taxon>
        <taxon>Methanomada group</taxon>
        <taxon>Methanobacteria</taxon>
        <taxon>Methanobacteriales</taxon>
        <taxon>Methanobacteriaceae</taxon>
        <taxon>Methanobrevibacter</taxon>
    </lineage>
</organism>
<reference key="1">
    <citation type="journal article" date="2007" name="Proc. Natl. Acad. Sci. U.S.A.">
        <title>Genomic and metabolic adaptations of Methanobrevibacter smithii to the human gut.</title>
        <authorList>
            <person name="Samuel B.S."/>
            <person name="Hansen E.E."/>
            <person name="Manchester J.K."/>
            <person name="Coutinho P.M."/>
            <person name="Henrissat B."/>
            <person name="Fulton R."/>
            <person name="Latreille P."/>
            <person name="Kim K."/>
            <person name="Wilson R.K."/>
            <person name="Gordon J.I."/>
        </authorList>
    </citation>
    <scope>NUCLEOTIDE SEQUENCE [LARGE SCALE GENOMIC DNA]</scope>
    <source>
        <strain>ATCC 35061 / DSM 861 / OCM 144 / PS</strain>
    </source>
</reference>
<feature type="chain" id="PRO_0000398736" description="2-phospho-L-lactate guanylyltransferase">
    <location>
        <begin position="1"/>
        <end position="224"/>
    </location>
</feature>
<gene>
    <name evidence="1" type="primary">cofC</name>
    <name type="ordered locus">Msm_0288</name>
</gene>
<proteinExistence type="inferred from homology"/>
<evidence type="ECO:0000255" key="1">
    <source>
        <dbReference type="HAMAP-Rule" id="MF_02114"/>
    </source>
</evidence>
<accession>A5UJW5</accession>
<sequence>MDDIYGIIPVSKFKECKTRLSPFLSEEERENLLKVMLKDVTDTLRKYTDKIIIISADEDVLNYAKSLNLSVLKENDNSNLNKALKQAMEYCKGKTKKVIIMPSDIPLIGKTNLKMVIDSSKQLDFIIIPSKGGGTNTIIMKPLAIRTKFGDFSYKEHVNAADRKNLNPQVHDSLFMALDVNTTEDLGEIIVHGENTETRRYLKELKINVESVHGSERLKVTRGS</sequence>
<name>COFC_METS3</name>
<dbReference type="EC" id="2.7.7.68" evidence="1"/>
<dbReference type="EMBL" id="CP000678">
    <property type="protein sequence ID" value="ABQ86493.1"/>
    <property type="molecule type" value="Genomic_DNA"/>
</dbReference>
<dbReference type="RefSeq" id="WP_011953806.1">
    <property type="nucleotide sequence ID" value="NZ_CP117965.1"/>
</dbReference>
<dbReference type="SMR" id="A5UJW5"/>
<dbReference type="STRING" id="420247.Msm_0288"/>
<dbReference type="EnsemblBacteria" id="ABQ86493">
    <property type="protein sequence ID" value="ABQ86493"/>
    <property type="gene ID" value="Msm_0288"/>
</dbReference>
<dbReference type="GeneID" id="78816912"/>
<dbReference type="KEGG" id="msi:Msm_0288"/>
<dbReference type="PATRIC" id="fig|420247.28.peg.291"/>
<dbReference type="eggNOG" id="arCOG04472">
    <property type="taxonomic scope" value="Archaea"/>
</dbReference>
<dbReference type="HOGENOM" id="CLU_076569_2_0_2"/>
<dbReference type="UniPathway" id="UPA00071"/>
<dbReference type="Proteomes" id="UP000001992">
    <property type="component" value="Chromosome"/>
</dbReference>
<dbReference type="GO" id="GO:0005525">
    <property type="term" value="F:GTP binding"/>
    <property type="evidence" value="ECO:0007669"/>
    <property type="project" value="UniProtKB-KW"/>
</dbReference>
<dbReference type="GO" id="GO:0043814">
    <property type="term" value="F:phospholactate guanylyltransferase activity"/>
    <property type="evidence" value="ECO:0007669"/>
    <property type="project" value="UniProtKB-EC"/>
</dbReference>
<dbReference type="GO" id="GO:0052645">
    <property type="term" value="P:F420-0 metabolic process"/>
    <property type="evidence" value="ECO:0007669"/>
    <property type="project" value="UniProtKB-UniRule"/>
</dbReference>
<dbReference type="Gene3D" id="3.90.550.10">
    <property type="entry name" value="Spore Coat Polysaccharide Biosynthesis Protein SpsA, Chain A"/>
    <property type="match status" value="1"/>
</dbReference>
<dbReference type="HAMAP" id="MF_02114">
    <property type="entry name" value="CofC"/>
    <property type="match status" value="1"/>
</dbReference>
<dbReference type="InterPro" id="IPR002835">
    <property type="entry name" value="CofC"/>
</dbReference>
<dbReference type="InterPro" id="IPR029044">
    <property type="entry name" value="Nucleotide-diphossugar_trans"/>
</dbReference>
<dbReference type="NCBIfam" id="TIGR03552">
    <property type="entry name" value="F420_cofC"/>
    <property type="match status" value="1"/>
</dbReference>
<dbReference type="PANTHER" id="PTHR40392">
    <property type="entry name" value="2-PHOSPHO-L-LACTATE GUANYLYLTRANSFERASE"/>
    <property type="match status" value="1"/>
</dbReference>
<dbReference type="PANTHER" id="PTHR40392:SF1">
    <property type="entry name" value="2-PHOSPHO-L-LACTATE GUANYLYLTRANSFERASE"/>
    <property type="match status" value="1"/>
</dbReference>
<dbReference type="Pfam" id="PF01983">
    <property type="entry name" value="CofC"/>
    <property type="match status" value="1"/>
</dbReference>
<dbReference type="SUPFAM" id="SSF53448">
    <property type="entry name" value="Nucleotide-diphospho-sugar transferases"/>
    <property type="match status" value="1"/>
</dbReference>
<keyword id="KW-0342">GTP-binding</keyword>
<keyword id="KW-0547">Nucleotide-binding</keyword>
<keyword id="KW-0548">Nucleotidyltransferase</keyword>
<keyword id="KW-0808">Transferase</keyword>
<comment type="function">
    <text evidence="1">Guanylyltransferase that catalyzes the activation of (2S)-2-phospholactate (2-PL) as (2S)-lactyl-2-diphospho-5'-guanosine, via the condensation of 2-PL with GTP. It is involved in the biosynthesis of coenzyme F420, a hydride carrier cofactor.</text>
</comment>
<comment type="catalytic activity">
    <reaction evidence="1">
        <text>(2S)-2-phospholactate + GTP + H(+) = (2S)-lactyl-2-diphospho-5'-guanosine + diphosphate</text>
        <dbReference type="Rhea" id="RHEA:63424"/>
        <dbReference type="ChEBI" id="CHEBI:15378"/>
        <dbReference type="ChEBI" id="CHEBI:33019"/>
        <dbReference type="ChEBI" id="CHEBI:37565"/>
        <dbReference type="ChEBI" id="CHEBI:59435"/>
        <dbReference type="ChEBI" id="CHEBI:59906"/>
        <dbReference type="EC" id="2.7.7.68"/>
    </reaction>
</comment>
<comment type="pathway">
    <text evidence="1">Cofactor biosynthesis; coenzyme F420 biosynthesis.</text>
</comment>
<comment type="subunit">
    <text evidence="1">Homodimer.</text>
</comment>
<comment type="similarity">
    <text evidence="1">Belongs to the CofC family.</text>
</comment>
<protein>
    <recommendedName>
        <fullName evidence="1">2-phospho-L-lactate guanylyltransferase</fullName>
        <shortName evidence="1">LP guanylyltransferase</shortName>
        <ecNumber evidence="1">2.7.7.68</ecNumber>
    </recommendedName>
</protein>